<evidence type="ECO:0000250" key="1"/>
<evidence type="ECO:0000305" key="2"/>
<evidence type="ECO:0000305" key="3">
    <source>
    </source>
</evidence>
<proteinExistence type="evidence at protein level"/>
<dbReference type="EMBL" id="DQ138324">
    <property type="protein sequence ID" value="AAZ30402.1"/>
    <property type="molecule type" value="mRNA"/>
</dbReference>
<dbReference type="SMR" id="A4GDQ6"/>
<dbReference type="Allergome" id="490">
    <property type="allergen name" value="Ole e 2"/>
</dbReference>
<dbReference type="GO" id="GO:0005938">
    <property type="term" value="C:cell cortex"/>
    <property type="evidence" value="ECO:0007669"/>
    <property type="project" value="TreeGrafter"/>
</dbReference>
<dbReference type="GO" id="GO:0005856">
    <property type="term" value="C:cytoskeleton"/>
    <property type="evidence" value="ECO:0007669"/>
    <property type="project" value="UniProtKB-SubCell"/>
</dbReference>
<dbReference type="GO" id="GO:0003785">
    <property type="term" value="F:actin monomer binding"/>
    <property type="evidence" value="ECO:0007669"/>
    <property type="project" value="TreeGrafter"/>
</dbReference>
<dbReference type="CDD" id="cd00148">
    <property type="entry name" value="PROF"/>
    <property type="match status" value="1"/>
</dbReference>
<dbReference type="FunFam" id="3.30.450.30:FF:000001">
    <property type="entry name" value="Profilin"/>
    <property type="match status" value="1"/>
</dbReference>
<dbReference type="Gene3D" id="3.30.450.30">
    <property type="entry name" value="Dynein light chain 2a, cytoplasmic"/>
    <property type="match status" value="1"/>
</dbReference>
<dbReference type="InterPro" id="IPR048278">
    <property type="entry name" value="PFN"/>
</dbReference>
<dbReference type="InterPro" id="IPR005455">
    <property type="entry name" value="PFN_euk"/>
</dbReference>
<dbReference type="InterPro" id="IPR036140">
    <property type="entry name" value="PFN_sf"/>
</dbReference>
<dbReference type="InterPro" id="IPR027310">
    <property type="entry name" value="Profilin_CS"/>
</dbReference>
<dbReference type="PANTHER" id="PTHR11604">
    <property type="entry name" value="PROFILIN"/>
    <property type="match status" value="1"/>
</dbReference>
<dbReference type="PANTHER" id="PTHR11604:SF25">
    <property type="entry name" value="PROFILIN-5"/>
    <property type="match status" value="1"/>
</dbReference>
<dbReference type="Pfam" id="PF00235">
    <property type="entry name" value="Profilin"/>
    <property type="match status" value="1"/>
</dbReference>
<dbReference type="PRINTS" id="PR00392">
    <property type="entry name" value="PROFILIN"/>
</dbReference>
<dbReference type="PRINTS" id="PR01640">
    <property type="entry name" value="PROFILINPLNT"/>
</dbReference>
<dbReference type="SMART" id="SM00392">
    <property type="entry name" value="PROF"/>
    <property type="match status" value="1"/>
</dbReference>
<dbReference type="SUPFAM" id="SSF55770">
    <property type="entry name" value="Profilin (actin-binding protein)"/>
    <property type="match status" value="1"/>
</dbReference>
<dbReference type="PROSITE" id="PS00414">
    <property type="entry name" value="PROFILIN"/>
    <property type="match status" value="1"/>
</dbReference>
<protein>
    <recommendedName>
        <fullName>Profilin-3</fullName>
    </recommendedName>
    <alternativeName>
        <fullName>Pollen allergen Ole e 2</fullName>
    </alternativeName>
    <allergenName>Ole e 2</allergenName>
</protein>
<reference key="1">
    <citation type="journal article" date="2012" name="PLoS ONE">
        <title>Characterization of profilin polymorphism in pollen with a focus on multifunctionality.</title>
        <authorList>
            <person name="Jimenez-Lopez J.C."/>
            <person name="Morales S."/>
            <person name="Castro A.J."/>
            <person name="Volkmann D."/>
            <person name="Rodriguez-Garcia M.I."/>
            <person name="Alche Jde D."/>
        </authorList>
    </citation>
    <scope>NUCLEOTIDE SEQUENCE [MRNA]</scope>
    <scope>POLYMORPHISM</scope>
    <source>
        <strain>cv. Manzanilla de Sevilla</strain>
    </source>
</reference>
<reference key="2">
    <citation type="journal article" date="2013" name="PLoS ONE">
        <title>Analysis of the effects of polymorphism on pollen profilin structural functionality and the generation of conformational, T- and B-cell epitopes.</title>
        <authorList>
            <person name="Jimenez-Lopez J.C."/>
            <person name="Rodriguez-Garcia M.I."/>
            <person name="Alche J.D."/>
        </authorList>
    </citation>
    <scope>3D-STRUCTURE MODELING</scope>
    <scope>DISULFIDE BOND</scope>
</reference>
<sequence>MSWQTYVDDHLMCDIEGHEGHRLTAAAIVGHDGSVWAQSATFPQFKPEEMNGIMTDFNEPGHLAPTGLHLGGTKYMVIQGEAGAVIRGKKGSGGITIKKTGQALVFGIYEEPVTPGQCNMVVERLGDYLLEQGM</sequence>
<name>PROAK_OLEEU</name>
<accession>A4GDQ6</accession>
<keyword id="KW-0009">Actin-binding</keyword>
<keyword id="KW-0020">Allergen</keyword>
<keyword id="KW-0963">Cytoplasm</keyword>
<keyword id="KW-0206">Cytoskeleton</keyword>
<keyword id="KW-1015">Disulfide bond</keyword>
<keyword id="KW-0597">Phosphoprotein</keyword>
<organism>
    <name type="scientific">Olea europaea</name>
    <name type="common">Common olive</name>
    <dbReference type="NCBI Taxonomy" id="4146"/>
    <lineage>
        <taxon>Eukaryota</taxon>
        <taxon>Viridiplantae</taxon>
        <taxon>Streptophyta</taxon>
        <taxon>Embryophyta</taxon>
        <taxon>Tracheophyta</taxon>
        <taxon>Spermatophyta</taxon>
        <taxon>Magnoliopsida</taxon>
        <taxon>eudicotyledons</taxon>
        <taxon>Gunneridae</taxon>
        <taxon>Pentapetalae</taxon>
        <taxon>asterids</taxon>
        <taxon>lamiids</taxon>
        <taxon>Lamiales</taxon>
        <taxon>Oleaceae</taxon>
        <taxon>Oleeae</taxon>
        <taxon>Olea</taxon>
    </lineage>
</organism>
<comment type="function">
    <text evidence="1">Binds to actin and affects the structure of the cytoskeleton. At high concentrations, profilin prevents the polymerization of actin, whereas it enhances it at low concentrations (By similarity).</text>
</comment>
<comment type="subunit">
    <text evidence="1">Occurs in many kinds of cells as a complex with monomeric actin in a 1:1 ratio.</text>
</comment>
<comment type="subcellular location">
    <subcellularLocation>
        <location evidence="1">Cytoplasm</location>
        <location evidence="1">Cytoskeleton</location>
    </subcellularLocation>
</comment>
<comment type="PTM">
    <text evidence="1">Phosphorylated by MAP kinases.</text>
</comment>
<comment type="polymorphism">
    <text>Several isoforms of the allergen exist due to polymorphism.</text>
</comment>
<comment type="allergen">
    <text>Causes an allergic reaction in human.</text>
</comment>
<comment type="miscellaneous">
    <text evidence="3">The variability of the residues taking part of IgE-binding epitopes might be responsible of the difference in cross-reactivity among olive pollen cultivars, and between distantly related pollen species, leading to a variable range of allergy reactions among atopic patients.</text>
</comment>
<comment type="similarity">
    <text evidence="2">Belongs to the profilin family.</text>
</comment>
<feature type="initiator methionine" description="Removed" evidence="1">
    <location>
        <position position="1"/>
    </location>
</feature>
<feature type="chain" id="PRO_0000425002" description="Profilin-3">
    <location>
        <begin position="2"/>
        <end position="134"/>
    </location>
</feature>
<feature type="short sequence motif" description="Involved in PIP2 interaction">
    <location>
        <begin position="84"/>
        <end position="100"/>
    </location>
</feature>
<feature type="modified residue" description="Phosphothreonine" evidence="1">
    <location>
        <position position="114"/>
    </location>
</feature>
<feature type="disulfide bond" evidence="3">
    <location>
        <begin position="13"/>
        <end position="118"/>
    </location>
</feature>